<comment type="function">
    <text>Involved in the catabolism of acetoin and ethanol.</text>
</comment>
<comment type="catalytic activity">
    <reaction>
        <text>an aldehyde + NAD(+) + H2O = a carboxylate + NADH + 2 H(+)</text>
        <dbReference type="Rhea" id="RHEA:16185"/>
        <dbReference type="ChEBI" id="CHEBI:15377"/>
        <dbReference type="ChEBI" id="CHEBI:15378"/>
        <dbReference type="ChEBI" id="CHEBI:17478"/>
        <dbReference type="ChEBI" id="CHEBI:29067"/>
        <dbReference type="ChEBI" id="CHEBI:57540"/>
        <dbReference type="ChEBI" id="CHEBI:57945"/>
        <dbReference type="EC" id="1.2.1.3"/>
    </reaction>
</comment>
<comment type="pathway">
    <text>Alcohol metabolism; ethanol degradation; acetate from ethanol: step 2/2.</text>
</comment>
<comment type="pathway">
    <text>Ketone degradation; acetoin degradation.</text>
</comment>
<comment type="similarity">
    <text evidence="2">Belongs to the aldehyde dehydrogenase family.</text>
</comment>
<reference key="1">
    <citation type="journal article" date="1992" name="J. Bacteriol.">
        <title>Identification and molecular characterization of the gene coding for acetaldehyde dehydrogenase II (acoD) of Alcaligenes eutrophus.</title>
        <authorList>
            <person name="Priefert H."/>
            <person name="Krueger N."/>
            <person name="Jendrossek D."/>
            <person name="Schmidt B."/>
            <person name="Steinbuechel A."/>
        </authorList>
    </citation>
    <scope>NUCLEOTIDE SEQUENCE [GENOMIC DNA]</scope>
    <scope>PROTEIN SEQUENCE OF 1-20</scope>
</reference>
<reference key="2">
    <citation type="journal article" date="2006" name="Nat. Biotechnol.">
        <title>Genome sequence of the bioplastic-producing 'Knallgas' bacterium Ralstonia eutropha H16.</title>
        <authorList>
            <person name="Pohlmann A."/>
            <person name="Fricke W.F."/>
            <person name="Reinecke F."/>
            <person name="Kusian B."/>
            <person name="Liesegang H."/>
            <person name="Cramm R."/>
            <person name="Eitinger T."/>
            <person name="Ewering C."/>
            <person name="Poetter M."/>
            <person name="Schwartz E."/>
            <person name="Strittmatter A."/>
            <person name="Voss I."/>
            <person name="Gottschalk G."/>
            <person name="Steinbuechel A."/>
            <person name="Friedrich B."/>
            <person name="Bowien B."/>
        </authorList>
    </citation>
    <scope>NUCLEOTIDE SEQUENCE [LARGE SCALE GENOMIC DNA]</scope>
    <source>
        <strain>ATCC 17699 / DSM 428 / KCTC 22496 / NCIMB 10442 / H16 / Stanier 337</strain>
    </source>
</reference>
<feature type="chain" id="PRO_0000056566" description="Acetaldehyde dehydrogenase 2">
    <location>
        <begin position="1"/>
        <end position="506"/>
    </location>
</feature>
<feature type="active site" evidence="1">
    <location>
        <position position="262"/>
    </location>
</feature>
<feature type="active site" evidence="1">
    <location>
        <position position="301"/>
    </location>
</feature>
<feature type="binding site" evidence="1">
    <location>
        <begin position="240"/>
        <end position="245"/>
    </location>
    <ligand>
        <name>NAD(+)</name>
        <dbReference type="ChEBI" id="CHEBI:57540"/>
    </ligand>
</feature>
<organism>
    <name type="scientific">Cupriavidus necator (strain ATCC 17699 / DSM 428 / KCTC 22496 / NCIMB 10442 / H16 / Stanier 337)</name>
    <name type="common">Ralstonia eutropha</name>
    <dbReference type="NCBI Taxonomy" id="381666"/>
    <lineage>
        <taxon>Bacteria</taxon>
        <taxon>Pseudomonadati</taxon>
        <taxon>Pseudomonadota</taxon>
        <taxon>Betaproteobacteria</taxon>
        <taxon>Burkholderiales</taxon>
        <taxon>Burkholderiaceae</taxon>
        <taxon>Cupriavidus</taxon>
    </lineage>
</organism>
<protein>
    <recommendedName>
        <fullName>Acetaldehyde dehydrogenase 2</fullName>
        <ecNumber>1.2.1.3</ecNumber>
    </recommendedName>
    <alternativeName>
        <fullName>Acetaldehyde dehydrogenase II</fullName>
        <shortName>ACDH-II</shortName>
    </alternativeName>
</protein>
<accession>P46368</accession>
<accession>Q0JZT2</accession>
<evidence type="ECO:0000250" key="1"/>
<evidence type="ECO:0000305" key="2"/>
<name>DHA2_CUPNH</name>
<dbReference type="EC" id="1.2.1.3"/>
<dbReference type="EMBL" id="M74003">
    <property type="protein sequence ID" value="AAA21943.1"/>
    <property type="molecule type" value="Genomic_DNA"/>
</dbReference>
<dbReference type="EMBL" id="AM260480">
    <property type="protein sequence ID" value="CAJ96742.1"/>
    <property type="molecule type" value="Genomic_DNA"/>
</dbReference>
<dbReference type="PIR" id="A42597">
    <property type="entry name" value="A42597"/>
</dbReference>
<dbReference type="SMR" id="P46368"/>
<dbReference type="STRING" id="381666.H16_B1960"/>
<dbReference type="KEGG" id="reh:H16_B1960"/>
<dbReference type="eggNOG" id="COG1012">
    <property type="taxonomic scope" value="Bacteria"/>
</dbReference>
<dbReference type="HOGENOM" id="CLU_005391_0_2_4"/>
<dbReference type="OrthoDB" id="6187633at2"/>
<dbReference type="UniPathway" id="UPA00040"/>
<dbReference type="UniPathway" id="UPA00780">
    <property type="reaction ID" value="UER00768"/>
</dbReference>
<dbReference type="Proteomes" id="UP000008210">
    <property type="component" value="Chromosome 2"/>
</dbReference>
<dbReference type="GO" id="GO:0004029">
    <property type="term" value="F:aldehyde dehydrogenase (NAD+) activity"/>
    <property type="evidence" value="ECO:0007669"/>
    <property type="project" value="UniProtKB-EC"/>
</dbReference>
<dbReference type="GO" id="GO:0045150">
    <property type="term" value="P:acetoin catabolic process"/>
    <property type="evidence" value="ECO:0007669"/>
    <property type="project" value="UniProtKB-UniPathway"/>
</dbReference>
<dbReference type="GO" id="GO:0006068">
    <property type="term" value="P:ethanol catabolic process"/>
    <property type="evidence" value="ECO:0007669"/>
    <property type="project" value="UniProtKB-UniPathway"/>
</dbReference>
<dbReference type="CDD" id="cd07116">
    <property type="entry name" value="ALDH_ACDHII-AcoD"/>
    <property type="match status" value="1"/>
</dbReference>
<dbReference type="FunFam" id="3.40.605.10:FF:000001">
    <property type="entry name" value="Aldehyde dehydrogenase 1"/>
    <property type="match status" value="1"/>
</dbReference>
<dbReference type="FunFam" id="3.40.309.10:FF:000017">
    <property type="entry name" value="Aldehyde dehydrogenase B"/>
    <property type="match status" value="1"/>
</dbReference>
<dbReference type="Gene3D" id="3.40.605.10">
    <property type="entry name" value="Aldehyde Dehydrogenase, Chain A, domain 1"/>
    <property type="match status" value="1"/>
</dbReference>
<dbReference type="Gene3D" id="3.40.309.10">
    <property type="entry name" value="Aldehyde Dehydrogenase, Chain A, domain 2"/>
    <property type="match status" value="1"/>
</dbReference>
<dbReference type="InterPro" id="IPR016161">
    <property type="entry name" value="Ald_DH/histidinol_DH"/>
</dbReference>
<dbReference type="InterPro" id="IPR016163">
    <property type="entry name" value="Ald_DH_C"/>
</dbReference>
<dbReference type="InterPro" id="IPR016160">
    <property type="entry name" value="Ald_DH_CS_CYS"/>
</dbReference>
<dbReference type="InterPro" id="IPR029510">
    <property type="entry name" value="Ald_DH_CS_GLU"/>
</dbReference>
<dbReference type="InterPro" id="IPR016162">
    <property type="entry name" value="Ald_DH_N"/>
</dbReference>
<dbReference type="InterPro" id="IPR015590">
    <property type="entry name" value="Aldehyde_DH_dom"/>
</dbReference>
<dbReference type="PANTHER" id="PTHR43111">
    <property type="entry name" value="ALDEHYDE DEHYDROGENASE B-RELATED"/>
    <property type="match status" value="1"/>
</dbReference>
<dbReference type="PANTHER" id="PTHR43111:SF1">
    <property type="entry name" value="ALDEHYDE DEHYDROGENASE B-RELATED"/>
    <property type="match status" value="1"/>
</dbReference>
<dbReference type="Pfam" id="PF00171">
    <property type="entry name" value="Aldedh"/>
    <property type="match status" value="1"/>
</dbReference>
<dbReference type="SUPFAM" id="SSF53720">
    <property type="entry name" value="ALDH-like"/>
    <property type="match status" value="1"/>
</dbReference>
<dbReference type="PROSITE" id="PS00070">
    <property type="entry name" value="ALDEHYDE_DEHYDR_CYS"/>
    <property type="match status" value="1"/>
</dbReference>
<dbReference type="PROSITE" id="PS00687">
    <property type="entry name" value="ALDEHYDE_DEHYDR_GLU"/>
    <property type="match status" value="1"/>
</dbReference>
<keyword id="KW-0006">Acetoin catabolism</keyword>
<keyword id="KW-0903">Direct protein sequencing</keyword>
<keyword id="KW-0520">NAD</keyword>
<keyword id="KW-0560">Oxidoreductase</keyword>
<keyword id="KW-1185">Reference proteome</keyword>
<sequence>MNMAEIAQLGVSNPYKQQYENYIGGAWVPPAGGEYFESTTPITGKPFTRVPRSGQQDVDAALDAAHAAKAAWARTSTTERANILNRIADRIEANLKLLAVAESIDNGKPVRETTAADLPLAVDHFRYFAGCIRAQEGGISEIDADTIAYHFHEPLGVVGQIIPWNFPLLMATWKLAPALAAGNCVVLKPAEQTPASILVLMEVIGDLLPPGVVNVINGFGLEAGKPLASSPRISKVAFTGETTTGRLIMQYASQNLIPVTLELGGKSPNIFFEDVLAADDAFFDKALEGFAMFALNQGEVCTCPSRALIQESIYDRFMERALKRVAAIRQGHPLDTGTMIGAQASAEQLEKILSYIDLGRKEGAQCLTGGERNVLDGDLAGGYYVKPTVFAGHNKMRIFQEEIFGPVVSVTTFKDEEEALAIANDTLYGLGAGVWTRDGARAFRMGRGIQAGRVWTNCYHAYPAHAAFGGYKQSGIGRENHRMMLDHYQQTKNLLVSYSPNALGFF</sequence>
<proteinExistence type="evidence at protein level"/>
<gene>
    <name type="primary">acoD</name>
    <name type="ordered locus">H16_B1960</name>
</gene>